<keyword id="KW-0276">Fatty acid metabolism</keyword>
<keyword id="KW-0413">Isomerase</keyword>
<keyword id="KW-0442">Lipid degradation</keyword>
<keyword id="KW-0443">Lipid metabolism</keyword>
<keyword id="KW-0456">Lyase</keyword>
<keyword id="KW-0511">Multifunctional enzyme</keyword>
<keyword id="KW-0520">NAD</keyword>
<keyword id="KW-0560">Oxidoreductase</keyword>
<feature type="chain" id="PRO_1000069585" description="Fatty acid oxidation complex subunit alpha">
    <location>
        <begin position="1"/>
        <end position="729"/>
    </location>
</feature>
<feature type="region of interest" description="Enoyl-CoA hydratase/isomerase" evidence="1">
    <location>
        <begin position="1"/>
        <end position="189"/>
    </location>
</feature>
<feature type="region of interest" description="3-hydroxyacyl-CoA dehydrogenase" evidence="1">
    <location>
        <begin position="311"/>
        <end position="729"/>
    </location>
</feature>
<feature type="active site" description="For 3-hydroxyacyl-CoA dehydrogenase activity" evidence="1">
    <location>
        <position position="450"/>
    </location>
</feature>
<feature type="binding site" evidence="1">
    <location>
        <position position="296"/>
    </location>
    <ligand>
        <name>substrate</name>
    </ligand>
</feature>
<feature type="binding site" evidence="1">
    <location>
        <position position="324"/>
    </location>
    <ligand>
        <name>NAD(+)</name>
        <dbReference type="ChEBI" id="CHEBI:57540"/>
    </ligand>
</feature>
<feature type="binding site" evidence="1">
    <location>
        <position position="343"/>
    </location>
    <ligand>
        <name>NAD(+)</name>
        <dbReference type="ChEBI" id="CHEBI:57540"/>
    </ligand>
</feature>
<feature type="binding site" evidence="1">
    <location>
        <begin position="400"/>
        <end position="402"/>
    </location>
    <ligand>
        <name>NAD(+)</name>
        <dbReference type="ChEBI" id="CHEBI:57540"/>
    </ligand>
</feature>
<feature type="binding site" evidence="1">
    <location>
        <position position="407"/>
    </location>
    <ligand>
        <name>NAD(+)</name>
        <dbReference type="ChEBI" id="CHEBI:57540"/>
    </ligand>
</feature>
<feature type="binding site" evidence="1">
    <location>
        <position position="429"/>
    </location>
    <ligand>
        <name>NAD(+)</name>
        <dbReference type="ChEBI" id="CHEBI:57540"/>
    </ligand>
</feature>
<feature type="binding site" evidence="1">
    <location>
        <position position="453"/>
    </location>
    <ligand>
        <name>NAD(+)</name>
        <dbReference type="ChEBI" id="CHEBI:57540"/>
    </ligand>
</feature>
<feature type="binding site" evidence="1">
    <location>
        <position position="500"/>
    </location>
    <ligand>
        <name>substrate</name>
    </ligand>
</feature>
<feature type="binding site" evidence="1">
    <location>
        <position position="660"/>
    </location>
    <ligand>
        <name>substrate</name>
    </ligand>
</feature>
<feature type="site" description="Important for catalytic activity" evidence="1">
    <location>
        <position position="119"/>
    </location>
</feature>
<feature type="site" description="Important for catalytic activity" evidence="1">
    <location>
        <position position="139"/>
    </location>
</feature>
<accession>A7FDF2</accession>
<sequence length="729" mass="78842">MLYQSETLQLHWLENGIAELVFDAPGSVNKLDTKTVANLGEALNVLEKQSELKGLLLRSAKTALIVGADITEFLSLFNAPPEKLHQWLVFANTIFNRLEDLPVPTISAINGYALGGGCECILATDFRIASPEARIGLPETKLGIMPGFGGSVRLPRLLGADSALEIIATGKDVTANDALKIGLVDAVVDPEKLVGSALTMLKQAIDGKLDWQAARRPKLEPLKLNPTEAAMCFTIAKGRVMQVAGKHYPAPLTAVKTIEAAAKFGRTEALNLETNSFVPLAGSNEARALVGIFLNDQYVKAQAKKLSKGVAAPKLAAVLGAGIMGGGIAYQSALKSVPVIMKDINENSLDLGMNEAAKLLNKQLERGKVDGLKMASILATIRPTLDYAGIERAQVIVEAVVENPKVKAAVLAEVEALIGEDTVLASNTSTIPIDQLAKSLKRPENFCGMHFFNPVHRMPLVEIIRGAKTSDKTLAAVVAYATQMGKTPIVVNDCPGFFVNRVLFPYLAGFGMLVRDGGDFHQIDKVMEKQFGWPMGPAYLLDVVGIDTAHHAQAVMAAGFPERMNKDYRDAVDVMFDNQRFGQKNGQGFYRYTQDAKGKPRKENDEQVDKLLAEISQPLQEFSDEDIIARTMIPMINEVVRCLEEGIIASAAEGDMALVYGLGFPPFHGGVFRYLDTLGSANYVEMAQRYAHLGALYHVPAGLRAKAEHNESYYPVSAALLDVSTNQPA</sequence>
<organism>
    <name type="scientific">Yersinia pseudotuberculosis serotype O:1b (strain IP 31758)</name>
    <dbReference type="NCBI Taxonomy" id="349747"/>
    <lineage>
        <taxon>Bacteria</taxon>
        <taxon>Pseudomonadati</taxon>
        <taxon>Pseudomonadota</taxon>
        <taxon>Gammaproteobacteria</taxon>
        <taxon>Enterobacterales</taxon>
        <taxon>Yersiniaceae</taxon>
        <taxon>Yersinia</taxon>
    </lineage>
</organism>
<reference key="1">
    <citation type="journal article" date="2007" name="PLoS Genet.">
        <title>The complete genome sequence of Yersinia pseudotuberculosis IP31758, the causative agent of Far East scarlet-like fever.</title>
        <authorList>
            <person name="Eppinger M."/>
            <person name="Rosovitz M.J."/>
            <person name="Fricke W.F."/>
            <person name="Rasko D.A."/>
            <person name="Kokorina G."/>
            <person name="Fayolle C."/>
            <person name="Lindler L.E."/>
            <person name="Carniel E."/>
            <person name="Ravel J."/>
        </authorList>
    </citation>
    <scope>NUCLEOTIDE SEQUENCE [LARGE SCALE GENOMIC DNA]</scope>
    <source>
        <strain>IP 31758</strain>
    </source>
</reference>
<evidence type="ECO:0000255" key="1">
    <source>
        <dbReference type="HAMAP-Rule" id="MF_01621"/>
    </source>
</evidence>
<comment type="function">
    <text evidence="1">Involved in the aerobic and anaerobic degradation of long-chain fatty acids via beta-oxidation cycle. Catalyzes the formation of 3-oxoacyl-CoA from enoyl-CoA via L-3-hydroxyacyl-CoA. It can also use D-3-hydroxyacyl-CoA and cis-3-enoyl-CoA as substrate.</text>
</comment>
<comment type="catalytic activity">
    <reaction evidence="1">
        <text>a (3S)-3-hydroxyacyl-CoA + NAD(+) = a 3-oxoacyl-CoA + NADH + H(+)</text>
        <dbReference type="Rhea" id="RHEA:22432"/>
        <dbReference type="ChEBI" id="CHEBI:15378"/>
        <dbReference type="ChEBI" id="CHEBI:57318"/>
        <dbReference type="ChEBI" id="CHEBI:57540"/>
        <dbReference type="ChEBI" id="CHEBI:57945"/>
        <dbReference type="ChEBI" id="CHEBI:90726"/>
        <dbReference type="EC" id="1.1.1.35"/>
    </reaction>
</comment>
<comment type="catalytic activity">
    <reaction evidence="1">
        <text>a (3S)-3-hydroxyacyl-CoA = a (2E)-enoyl-CoA + H2O</text>
        <dbReference type="Rhea" id="RHEA:16105"/>
        <dbReference type="ChEBI" id="CHEBI:15377"/>
        <dbReference type="ChEBI" id="CHEBI:57318"/>
        <dbReference type="ChEBI" id="CHEBI:58856"/>
        <dbReference type="EC" id="4.2.1.17"/>
    </reaction>
</comment>
<comment type="catalytic activity">
    <reaction evidence="1">
        <text>a 4-saturated-(3S)-3-hydroxyacyl-CoA = a (3E)-enoyl-CoA + H2O</text>
        <dbReference type="Rhea" id="RHEA:20724"/>
        <dbReference type="ChEBI" id="CHEBI:15377"/>
        <dbReference type="ChEBI" id="CHEBI:58521"/>
        <dbReference type="ChEBI" id="CHEBI:137480"/>
        <dbReference type="EC" id="4.2.1.17"/>
    </reaction>
</comment>
<comment type="catalytic activity">
    <reaction evidence="1">
        <text>(3S)-3-hydroxybutanoyl-CoA = (3R)-3-hydroxybutanoyl-CoA</text>
        <dbReference type="Rhea" id="RHEA:21760"/>
        <dbReference type="ChEBI" id="CHEBI:57315"/>
        <dbReference type="ChEBI" id="CHEBI:57316"/>
        <dbReference type="EC" id="5.1.2.3"/>
    </reaction>
</comment>
<comment type="catalytic activity">
    <reaction evidence="1">
        <text>a (3Z)-enoyl-CoA = a 4-saturated (2E)-enoyl-CoA</text>
        <dbReference type="Rhea" id="RHEA:45900"/>
        <dbReference type="ChEBI" id="CHEBI:85097"/>
        <dbReference type="ChEBI" id="CHEBI:85489"/>
        <dbReference type="EC" id="5.3.3.8"/>
    </reaction>
</comment>
<comment type="catalytic activity">
    <reaction evidence="1">
        <text>a (3E)-enoyl-CoA = a 4-saturated (2E)-enoyl-CoA</text>
        <dbReference type="Rhea" id="RHEA:45228"/>
        <dbReference type="ChEBI" id="CHEBI:58521"/>
        <dbReference type="ChEBI" id="CHEBI:85097"/>
        <dbReference type="EC" id="5.3.3.8"/>
    </reaction>
</comment>
<comment type="pathway">
    <text evidence="1">Lipid metabolism; fatty acid beta-oxidation.</text>
</comment>
<comment type="subunit">
    <text evidence="1">Heterotetramer of two alpha chains (FadB) and two beta chains (FadA).</text>
</comment>
<comment type="similarity">
    <text evidence="1">In the N-terminal section; belongs to the enoyl-CoA hydratase/isomerase family.</text>
</comment>
<comment type="similarity">
    <text evidence="1">In the C-terminal section; belongs to the 3-hydroxyacyl-CoA dehydrogenase family.</text>
</comment>
<proteinExistence type="inferred from homology"/>
<name>FADB_YERP3</name>
<protein>
    <recommendedName>
        <fullName evidence="1">Fatty acid oxidation complex subunit alpha</fullName>
    </recommendedName>
    <domain>
        <recommendedName>
            <fullName evidence="1">Enoyl-CoA hydratase/Delta(3)-cis-Delta(2)-trans-enoyl-CoA isomerase/3-hydroxybutyryl-CoA epimerase</fullName>
            <ecNumber evidence="1">4.2.1.17</ecNumber>
            <ecNumber evidence="1">5.1.2.3</ecNumber>
            <ecNumber evidence="1">5.3.3.8</ecNumber>
        </recommendedName>
    </domain>
    <domain>
        <recommendedName>
            <fullName evidence="1">3-hydroxyacyl-CoA dehydrogenase</fullName>
            <ecNumber evidence="1">1.1.1.35</ecNumber>
        </recommendedName>
    </domain>
</protein>
<dbReference type="EC" id="4.2.1.17" evidence="1"/>
<dbReference type="EC" id="5.1.2.3" evidence="1"/>
<dbReference type="EC" id="5.3.3.8" evidence="1"/>
<dbReference type="EC" id="1.1.1.35" evidence="1"/>
<dbReference type="EMBL" id="CP000720">
    <property type="protein sequence ID" value="ABS46378.1"/>
    <property type="molecule type" value="Genomic_DNA"/>
</dbReference>
<dbReference type="RefSeq" id="WP_012104346.1">
    <property type="nucleotide sequence ID" value="NC_009708.1"/>
</dbReference>
<dbReference type="SMR" id="A7FDF2"/>
<dbReference type="KEGG" id="ypi:YpsIP31758_0283"/>
<dbReference type="HOGENOM" id="CLU_009834_16_3_6"/>
<dbReference type="UniPathway" id="UPA00659"/>
<dbReference type="Proteomes" id="UP000002412">
    <property type="component" value="Chromosome"/>
</dbReference>
<dbReference type="GO" id="GO:0036125">
    <property type="term" value="C:fatty acid beta-oxidation multienzyme complex"/>
    <property type="evidence" value="ECO:0007669"/>
    <property type="project" value="InterPro"/>
</dbReference>
<dbReference type="GO" id="GO:0008692">
    <property type="term" value="F:3-hydroxybutyryl-CoA epimerase activity"/>
    <property type="evidence" value="ECO:0007669"/>
    <property type="project" value="UniProtKB-UniRule"/>
</dbReference>
<dbReference type="GO" id="GO:0004165">
    <property type="term" value="F:delta(3)-delta(2)-enoyl-CoA isomerase activity"/>
    <property type="evidence" value="ECO:0007669"/>
    <property type="project" value="UniProtKB-UniRule"/>
</dbReference>
<dbReference type="GO" id="GO:0004300">
    <property type="term" value="F:enoyl-CoA hydratase activity"/>
    <property type="evidence" value="ECO:0007669"/>
    <property type="project" value="UniProtKB-UniRule"/>
</dbReference>
<dbReference type="GO" id="GO:0016509">
    <property type="term" value="F:long-chain-3-hydroxyacyl-CoA dehydrogenase activity"/>
    <property type="evidence" value="ECO:0007669"/>
    <property type="project" value="TreeGrafter"/>
</dbReference>
<dbReference type="GO" id="GO:0070403">
    <property type="term" value="F:NAD+ binding"/>
    <property type="evidence" value="ECO:0007669"/>
    <property type="project" value="InterPro"/>
</dbReference>
<dbReference type="GO" id="GO:0006635">
    <property type="term" value="P:fatty acid beta-oxidation"/>
    <property type="evidence" value="ECO:0007669"/>
    <property type="project" value="UniProtKB-UniRule"/>
</dbReference>
<dbReference type="CDD" id="cd06558">
    <property type="entry name" value="crotonase-like"/>
    <property type="match status" value="1"/>
</dbReference>
<dbReference type="FunFam" id="1.10.1040.50:FF:000001">
    <property type="entry name" value="Fatty acid oxidation complex subunit alpha"/>
    <property type="match status" value="1"/>
</dbReference>
<dbReference type="FunFam" id="3.90.226.10:FF:000018">
    <property type="entry name" value="Fatty acid oxidation complex subunit alpha"/>
    <property type="match status" value="1"/>
</dbReference>
<dbReference type="FunFam" id="3.40.50.720:FF:000009">
    <property type="entry name" value="Fatty oxidation complex, alpha subunit"/>
    <property type="match status" value="1"/>
</dbReference>
<dbReference type="Gene3D" id="1.10.1040.50">
    <property type="match status" value="1"/>
</dbReference>
<dbReference type="Gene3D" id="3.90.226.10">
    <property type="entry name" value="2-enoyl-CoA Hydratase, Chain A, domain 1"/>
    <property type="match status" value="1"/>
</dbReference>
<dbReference type="Gene3D" id="3.40.50.720">
    <property type="entry name" value="NAD(P)-binding Rossmann-like Domain"/>
    <property type="match status" value="1"/>
</dbReference>
<dbReference type="HAMAP" id="MF_01621">
    <property type="entry name" value="FadB"/>
    <property type="match status" value="1"/>
</dbReference>
<dbReference type="InterPro" id="IPR006180">
    <property type="entry name" value="3-OHacyl-CoA_DH_CS"/>
</dbReference>
<dbReference type="InterPro" id="IPR006176">
    <property type="entry name" value="3-OHacyl-CoA_DH_NAD-bd"/>
</dbReference>
<dbReference type="InterPro" id="IPR006108">
    <property type="entry name" value="3HC_DH_C"/>
</dbReference>
<dbReference type="InterPro" id="IPR008927">
    <property type="entry name" value="6-PGluconate_DH-like_C_sf"/>
</dbReference>
<dbReference type="InterPro" id="IPR029045">
    <property type="entry name" value="ClpP/crotonase-like_dom_sf"/>
</dbReference>
<dbReference type="InterPro" id="IPR018376">
    <property type="entry name" value="Enoyl-CoA_hyd/isom_CS"/>
</dbReference>
<dbReference type="InterPro" id="IPR001753">
    <property type="entry name" value="Enoyl-CoA_hydra/iso"/>
</dbReference>
<dbReference type="InterPro" id="IPR050136">
    <property type="entry name" value="FA_oxidation_alpha_subunit"/>
</dbReference>
<dbReference type="InterPro" id="IPR012799">
    <property type="entry name" value="FadB"/>
</dbReference>
<dbReference type="InterPro" id="IPR036291">
    <property type="entry name" value="NAD(P)-bd_dom_sf"/>
</dbReference>
<dbReference type="NCBIfam" id="TIGR02437">
    <property type="entry name" value="FadB"/>
    <property type="match status" value="1"/>
</dbReference>
<dbReference type="NCBIfam" id="NF008727">
    <property type="entry name" value="PRK11730.1"/>
    <property type="match status" value="1"/>
</dbReference>
<dbReference type="PANTHER" id="PTHR43612">
    <property type="entry name" value="TRIFUNCTIONAL ENZYME SUBUNIT ALPHA"/>
    <property type="match status" value="1"/>
</dbReference>
<dbReference type="PANTHER" id="PTHR43612:SF3">
    <property type="entry name" value="TRIFUNCTIONAL ENZYME SUBUNIT ALPHA, MITOCHONDRIAL"/>
    <property type="match status" value="1"/>
</dbReference>
<dbReference type="Pfam" id="PF00725">
    <property type="entry name" value="3HCDH"/>
    <property type="match status" value="1"/>
</dbReference>
<dbReference type="Pfam" id="PF02737">
    <property type="entry name" value="3HCDH_N"/>
    <property type="match status" value="1"/>
</dbReference>
<dbReference type="Pfam" id="PF00378">
    <property type="entry name" value="ECH_1"/>
    <property type="match status" value="1"/>
</dbReference>
<dbReference type="SUPFAM" id="SSF48179">
    <property type="entry name" value="6-phosphogluconate dehydrogenase C-terminal domain-like"/>
    <property type="match status" value="2"/>
</dbReference>
<dbReference type="SUPFAM" id="SSF52096">
    <property type="entry name" value="ClpP/crotonase"/>
    <property type="match status" value="1"/>
</dbReference>
<dbReference type="SUPFAM" id="SSF51735">
    <property type="entry name" value="NAD(P)-binding Rossmann-fold domains"/>
    <property type="match status" value="1"/>
</dbReference>
<dbReference type="PROSITE" id="PS00067">
    <property type="entry name" value="3HCDH"/>
    <property type="match status" value="1"/>
</dbReference>
<dbReference type="PROSITE" id="PS00166">
    <property type="entry name" value="ENOYL_COA_HYDRATASE"/>
    <property type="match status" value="1"/>
</dbReference>
<gene>
    <name evidence="1" type="primary">fadB</name>
    <name type="ordered locus">YpsIP31758_0283</name>
</gene>